<feature type="chain" id="PRO_0000417503" description="Spermatogenesis associated 6-like protein">
    <location>
        <begin position="1"/>
        <end position="347"/>
    </location>
</feature>
<feature type="region of interest" description="Disordered" evidence="2">
    <location>
        <begin position="115"/>
        <end position="199"/>
    </location>
</feature>
<feature type="region of interest" description="Disordered" evidence="2">
    <location>
        <begin position="234"/>
        <end position="285"/>
    </location>
</feature>
<feature type="compositionally biased region" description="Polar residues" evidence="2">
    <location>
        <begin position="116"/>
        <end position="125"/>
    </location>
</feature>
<feature type="compositionally biased region" description="Basic residues" evidence="2">
    <location>
        <begin position="153"/>
        <end position="166"/>
    </location>
</feature>
<feature type="compositionally biased region" description="Basic and acidic residues" evidence="2">
    <location>
        <begin position="170"/>
        <end position="183"/>
    </location>
</feature>
<feature type="compositionally biased region" description="Polar residues" evidence="2">
    <location>
        <begin position="254"/>
        <end position="277"/>
    </location>
</feature>
<feature type="modified residue" description="Phosphoserine" evidence="1">
    <location>
        <position position="218"/>
    </location>
</feature>
<feature type="modified residue" description="Phosphoserine" evidence="4">
    <location>
        <position position="221"/>
    </location>
</feature>
<keyword id="KW-0597">Phosphoprotein</keyword>
<keyword id="KW-1185">Reference proteome</keyword>
<sequence>MRFVKVFEEAIDPGAVAELLESFLTRFELVQLVSPAWEELAYYEKNTRDFLFPEPRLASSHLGMQREVLMKTAIWFPGIAPKIEFSTRTAILECVFPCKNRFICEERCRLERSVSKSHGQRVQATNRKKKPKEKDSDQLPKGTQSRLPSPQRLHLHRPTQRNHGKSFKFPGERKPPFVVRHVDSGNPFGENNLEHCSKKSRRKPKLINFDLSKKRASSLDSLEANIKVIREPDERIVLKSQPPPPVDSSESRKPSLSHQGDASLHTETSVTTSQLSRPPSPLNQPLLQERFQPFSQSTWQKIPEGVRSLLTSHRAHPKDSFISETNSIHERPSYPLKKHLLRAQRYF</sequence>
<reference key="1">
    <citation type="journal article" date="2009" name="PLoS Biol.">
        <title>Lineage-specific biology revealed by a finished genome assembly of the mouse.</title>
        <authorList>
            <person name="Church D.M."/>
            <person name="Goodstadt L."/>
            <person name="Hillier L.W."/>
            <person name="Zody M.C."/>
            <person name="Goldstein S."/>
            <person name="She X."/>
            <person name="Bult C.J."/>
            <person name="Agarwala R."/>
            <person name="Cherry J.L."/>
            <person name="DiCuccio M."/>
            <person name="Hlavina W."/>
            <person name="Kapustin Y."/>
            <person name="Meric P."/>
            <person name="Maglott D."/>
            <person name="Birtle Z."/>
            <person name="Marques A.C."/>
            <person name="Graves T."/>
            <person name="Zhou S."/>
            <person name="Teague B."/>
            <person name="Potamousis K."/>
            <person name="Churas C."/>
            <person name="Place M."/>
            <person name="Herschleb J."/>
            <person name="Runnheim R."/>
            <person name="Forrest D."/>
            <person name="Amos-Landgraf J."/>
            <person name="Schwartz D.C."/>
            <person name="Cheng Z."/>
            <person name="Lindblad-Toh K."/>
            <person name="Eichler E.E."/>
            <person name="Ponting C.P."/>
        </authorList>
    </citation>
    <scope>NUCLEOTIDE SEQUENCE [LARGE SCALE GENOMIC DNA]</scope>
    <source>
        <strain>C57BL/6J</strain>
    </source>
</reference>
<reference key="2">
    <citation type="journal article" date="2004" name="Genome Res.">
        <title>The status, quality, and expansion of the NIH full-length cDNA project: the Mammalian Gene Collection (MGC).</title>
        <authorList>
            <consortium name="The MGC Project Team"/>
        </authorList>
    </citation>
    <scope>NUCLEOTIDE SEQUENCE [LARGE SCALE MRNA]</scope>
    <source>
        <tissue>Brain</tissue>
    </source>
</reference>
<reference key="3">
    <citation type="journal article" date="2010" name="Cell">
        <title>A tissue-specific atlas of mouse protein phosphorylation and expression.</title>
        <authorList>
            <person name="Huttlin E.L."/>
            <person name="Jedrychowski M.P."/>
            <person name="Elias J.E."/>
            <person name="Goswami T."/>
            <person name="Rad R."/>
            <person name="Beausoleil S.A."/>
            <person name="Villen J."/>
            <person name="Haas W."/>
            <person name="Sowa M.E."/>
            <person name="Gygi S.P."/>
        </authorList>
    </citation>
    <scope>PHOSPHORYLATION [LARGE SCALE ANALYSIS] AT SER-221</scope>
    <scope>IDENTIFICATION BY MASS SPECTROMETRY [LARGE SCALE ANALYSIS]</scope>
    <source>
        <tissue>Lung</tissue>
    </source>
</reference>
<organism>
    <name type="scientific">Mus musculus</name>
    <name type="common">Mouse</name>
    <dbReference type="NCBI Taxonomy" id="10090"/>
    <lineage>
        <taxon>Eukaryota</taxon>
        <taxon>Metazoa</taxon>
        <taxon>Chordata</taxon>
        <taxon>Craniata</taxon>
        <taxon>Vertebrata</taxon>
        <taxon>Euteleostomi</taxon>
        <taxon>Mammalia</taxon>
        <taxon>Eutheria</taxon>
        <taxon>Euarchontoglires</taxon>
        <taxon>Glires</taxon>
        <taxon>Rodentia</taxon>
        <taxon>Myomorpha</taxon>
        <taxon>Muroidea</taxon>
        <taxon>Muridae</taxon>
        <taxon>Murinae</taxon>
        <taxon>Mus</taxon>
        <taxon>Mus</taxon>
    </lineage>
</organism>
<evidence type="ECO:0000250" key="1">
    <source>
        <dbReference type="UniProtKB" id="Q6AYJ3"/>
    </source>
</evidence>
<evidence type="ECO:0000256" key="2">
    <source>
        <dbReference type="SAM" id="MobiDB-lite"/>
    </source>
</evidence>
<evidence type="ECO:0000305" key="3"/>
<evidence type="ECO:0007744" key="4">
    <source>
    </source>
</evidence>
<gene>
    <name type="primary">Spata6l</name>
</gene>
<name>SPA6L_MOUSE</name>
<dbReference type="EMBL" id="AC113961">
    <property type="status" value="NOT_ANNOTATED_CDS"/>
    <property type="molecule type" value="Genomic_DNA"/>
</dbReference>
<dbReference type="EMBL" id="AC163993">
    <property type="status" value="NOT_ANNOTATED_CDS"/>
    <property type="molecule type" value="Genomic_DNA"/>
</dbReference>
<dbReference type="EMBL" id="BC147044">
    <property type="protein sequence ID" value="AAI47045.1"/>
    <property type="molecule type" value="mRNA"/>
</dbReference>
<dbReference type="EMBL" id="BC147045">
    <property type="protein sequence ID" value="AAI47046.1"/>
    <property type="molecule type" value="mRNA"/>
</dbReference>
<dbReference type="CCDS" id="CCDS37948.1"/>
<dbReference type="RefSeq" id="NP_001361081.1">
    <property type="nucleotide sequence ID" value="NM_001374152.1"/>
</dbReference>
<dbReference type="RefSeq" id="NP_941053.2">
    <property type="nucleotide sequence ID" value="NM_198651.2"/>
</dbReference>
<dbReference type="RefSeq" id="XP_006527225.1">
    <property type="nucleotide sequence ID" value="XM_006527162.3"/>
</dbReference>
<dbReference type="STRING" id="10090.ENSMUSP00000025872"/>
<dbReference type="iPTMnet" id="B2RV46"/>
<dbReference type="PhosphoSitePlus" id="B2RV46"/>
<dbReference type="PaxDb" id="10090-ENSMUSP00000025872"/>
<dbReference type="Antibodypedia" id="24022">
    <property type="antibodies" value="65 antibodies from 12 providers"/>
</dbReference>
<dbReference type="DNASU" id="381218"/>
<dbReference type="Ensembl" id="ENSMUST00000025872.13">
    <property type="protein sequence ID" value="ENSMUSP00000025872.7"/>
    <property type="gene ID" value="ENSMUSG00000064202.17"/>
</dbReference>
<dbReference type="GeneID" id="381218"/>
<dbReference type="KEGG" id="mmu:381218"/>
<dbReference type="UCSC" id="uc008hcq.1">
    <property type="organism name" value="mouse"/>
</dbReference>
<dbReference type="AGR" id="MGI:1918036"/>
<dbReference type="CTD" id="55064"/>
<dbReference type="MGI" id="MGI:1918036">
    <property type="gene designation" value="Spata6l"/>
</dbReference>
<dbReference type="VEuPathDB" id="HostDB:ENSMUSG00000064202"/>
<dbReference type="eggNOG" id="ENOG502RYM7">
    <property type="taxonomic scope" value="Eukaryota"/>
</dbReference>
<dbReference type="GeneTree" id="ENSGT00530000063821"/>
<dbReference type="InParanoid" id="B2RV46"/>
<dbReference type="OMA" id="ADFHWET"/>
<dbReference type="PhylomeDB" id="B2RV46"/>
<dbReference type="TreeFam" id="TF328520"/>
<dbReference type="BioGRID-ORCS" id="381218">
    <property type="hits" value="1 hit in 77 CRISPR screens"/>
</dbReference>
<dbReference type="ChiTaRS" id="4430402I18Rik">
    <property type="organism name" value="mouse"/>
</dbReference>
<dbReference type="PRO" id="PR:B2RV46"/>
<dbReference type="Proteomes" id="UP000000589">
    <property type="component" value="Chromosome 19"/>
</dbReference>
<dbReference type="RNAct" id="B2RV46">
    <property type="molecule type" value="protein"/>
</dbReference>
<dbReference type="Bgee" id="ENSMUSG00000064202">
    <property type="expression patterns" value="Expressed in spermatid and 85 other cell types or tissues"/>
</dbReference>
<dbReference type="ExpressionAtlas" id="B2RV46">
    <property type="expression patterns" value="baseline and differential"/>
</dbReference>
<dbReference type="GO" id="GO:0120212">
    <property type="term" value="C:sperm head-tail coupling apparatus"/>
    <property type="evidence" value="ECO:0007669"/>
    <property type="project" value="InterPro"/>
</dbReference>
<dbReference type="GO" id="GO:0032027">
    <property type="term" value="F:myosin light chain binding"/>
    <property type="evidence" value="ECO:0007669"/>
    <property type="project" value="InterPro"/>
</dbReference>
<dbReference type="GO" id="GO:0007283">
    <property type="term" value="P:spermatogenesis"/>
    <property type="evidence" value="ECO:0007669"/>
    <property type="project" value="InterPro"/>
</dbReference>
<dbReference type="InterPro" id="IPR042769">
    <property type="entry name" value="SPATA6_fam"/>
</dbReference>
<dbReference type="InterPro" id="IPR032732">
    <property type="entry name" value="SPATA6_N"/>
</dbReference>
<dbReference type="PANTHER" id="PTHR16435:SF5">
    <property type="entry name" value="SPERMATOGENESIS ASSOCIATED 6-LIKE PROTEIN"/>
    <property type="match status" value="1"/>
</dbReference>
<dbReference type="PANTHER" id="PTHR16435">
    <property type="entry name" value="SPERMATOGENESIS-ASSOCIATED PROTEIN 6 SPATA6"/>
    <property type="match status" value="1"/>
</dbReference>
<dbReference type="Pfam" id="PF14909">
    <property type="entry name" value="SPATA6"/>
    <property type="match status" value="1"/>
</dbReference>
<proteinExistence type="evidence at protein level"/>
<protein>
    <recommendedName>
        <fullName>Spermatogenesis associated 6-like protein</fullName>
    </recommendedName>
</protein>
<comment type="similarity">
    <text evidence="3">Belongs to the SPATA6 family.</text>
</comment>
<accession>B2RV46</accession>